<sequence length="277" mass="31037">MKSISTLGICLRASQDLAKTRPISLLSTRSFANLTQGTSTYHSLSIRSIRHNRLEARYTNILNRNILPYKNYSTGTAPPPPPPPPPPHDKNAKGKFLFNRIGRAFTFSLSSVIVLGATCISVLVVYLILSELFLPSGDTRTFNKAVRMLESNELAHEALGFKKGQRVKAHGEQHADKWARNRPAQSVRTRGADGKDYLFMKFQVESPSGKYGTVTLEQVDRTFWSSEFLYIALDMPGNKRIYIKEPKFQSKKYVPKVGSLASNDGFLGLKWGPKKDD</sequence>
<comment type="function">
    <text evidence="1">Essential component of the TIM23 complex, a complex that mediates the translocation of transit peptide-containing proteins across the mitochondrial inner membrane. Required to keep the TOM and the TIM23 complexes in close contact. At some point, it is released from the TOM23 complex to allow protein translocation into the mitochondrial matrix (By similarity).</text>
</comment>
<comment type="subunit">
    <text evidence="1">Component of the TIM23 complex, at least composed of TIM23, TIM17, TIM50 and TIM21.</text>
</comment>
<comment type="subcellular location">
    <subcellularLocation>
        <location evidence="1">Mitochondrion inner membrane</location>
        <topology evidence="1">Single-pass membrane protein</topology>
    </subcellularLocation>
</comment>
<comment type="similarity">
    <text evidence="4">Belongs to the TIM21 family.</text>
</comment>
<comment type="sequence caution" evidence="4">
    <conflict type="erroneous initiation">
        <sequence resource="EMBL-CDS" id="CAG85804"/>
    </conflict>
</comment>
<gene>
    <name type="primary">TIM21</name>
    <name type="ordered locus">DEHA2C02002g</name>
</gene>
<keyword id="KW-0472">Membrane</keyword>
<keyword id="KW-0496">Mitochondrion</keyword>
<keyword id="KW-0999">Mitochondrion inner membrane</keyword>
<keyword id="KW-0653">Protein transport</keyword>
<keyword id="KW-1185">Reference proteome</keyword>
<keyword id="KW-0809">Transit peptide</keyword>
<keyword id="KW-0811">Translocation</keyword>
<keyword id="KW-0812">Transmembrane</keyword>
<keyword id="KW-1133">Transmembrane helix</keyword>
<keyword id="KW-0813">Transport</keyword>
<protein>
    <recommendedName>
        <fullName>Mitochondrial import inner membrane translocase subunit TIM21</fullName>
    </recommendedName>
</protein>
<reference key="1">
    <citation type="journal article" date="2004" name="Nature">
        <title>Genome evolution in yeasts.</title>
        <authorList>
            <person name="Dujon B."/>
            <person name="Sherman D."/>
            <person name="Fischer G."/>
            <person name="Durrens P."/>
            <person name="Casaregola S."/>
            <person name="Lafontaine I."/>
            <person name="de Montigny J."/>
            <person name="Marck C."/>
            <person name="Neuveglise C."/>
            <person name="Talla E."/>
            <person name="Goffard N."/>
            <person name="Frangeul L."/>
            <person name="Aigle M."/>
            <person name="Anthouard V."/>
            <person name="Babour A."/>
            <person name="Barbe V."/>
            <person name="Barnay S."/>
            <person name="Blanchin S."/>
            <person name="Beckerich J.-M."/>
            <person name="Beyne E."/>
            <person name="Bleykasten C."/>
            <person name="Boisrame A."/>
            <person name="Boyer J."/>
            <person name="Cattolico L."/>
            <person name="Confanioleri F."/>
            <person name="de Daruvar A."/>
            <person name="Despons L."/>
            <person name="Fabre E."/>
            <person name="Fairhead C."/>
            <person name="Ferry-Dumazet H."/>
            <person name="Groppi A."/>
            <person name="Hantraye F."/>
            <person name="Hennequin C."/>
            <person name="Jauniaux N."/>
            <person name="Joyet P."/>
            <person name="Kachouri R."/>
            <person name="Kerrest A."/>
            <person name="Koszul R."/>
            <person name="Lemaire M."/>
            <person name="Lesur I."/>
            <person name="Ma L."/>
            <person name="Muller H."/>
            <person name="Nicaud J.-M."/>
            <person name="Nikolski M."/>
            <person name="Oztas S."/>
            <person name="Ozier-Kalogeropoulos O."/>
            <person name="Pellenz S."/>
            <person name="Potier S."/>
            <person name="Richard G.-F."/>
            <person name="Straub M.-L."/>
            <person name="Suleau A."/>
            <person name="Swennen D."/>
            <person name="Tekaia F."/>
            <person name="Wesolowski-Louvel M."/>
            <person name="Westhof E."/>
            <person name="Wirth B."/>
            <person name="Zeniou-Meyer M."/>
            <person name="Zivanovic Y."/>
            <person name="Bolotin-Fukuhara M."/>
            <person name="Thierry A."/>
            <person name="Bouchier C."/>
            <person name="Caudron B."/>
            <person name="Scarpelli C."/>
            <person name="Gaillardin C."/>
            <person name="Weissenbach J."/>
            <person name="Wincker P."/>
            <person name="Souciet J.-L."/>
        </authorList>
    </citation>
    <scope>NUCLEOTIDE SEQUENCE [LARGE SCALE GENOMIC DNA]</scope>
    <source>
        <strain>ATCC 36239 / CBS 767 / BCRC 21394 / JCM 1990 / NBRC 0083 / IGC 2968</strain>
    </source>
</reference>
<evidence type="ECO:0000250" key="1"/>
<evidence type="ECO:0000255" key="2"/>
<evidence type="ECO:0000256" key="3">
    <source>
        <dbReference type="SAM" id="MobiDB-lite"/>
    </source>
</evidence>
<evidence type="ECO:0000305" key="4"/>
<organism>
    <name type="scientific">Debaryomyces hansenii (strain ATCC 36239 / CBS 767 / BCRC 21394 / JCM 1990 / NBRC 0083 / IGC 2968)</name>
    <name type="common">Yeast</name>
    <name type="synonym">Torulaspora hansenii</name>
    <dbReference type="NCBI Taxonomy" id="284592"/>
    <lineage>
        <taxon>Eukaryota</taxon>
        <taxon>Fungi</taxon>
        <taxon>Dikarya</taxon>
        <taxon>Ascomycota</taxon>
        <taxon>Saccharomycotina</taxon>
        <taxon>Pichiomycetes</taxon>
        <taxon>Debaryomycetaceae</taxon>
        <taxon>Debaryomyces</taxon>
    </lineage>
</organism>
<proteinExistence type="inferred from homology"/>
<accession>Q6BVK1</accession>
<feature type="transit peptide" description="Mitochondrion" evidence="2">
    <location>
        <begin position="1"/>
        <end status="unknown"/>
    </location>
</feature>
<feature type="chain" id="PRO_0000043144" description="Mitochondrial import inner membrane translocase subunit TIM21">
    <location>
        <begin status="unknown"/>
        <end position="277"/>
    </location>
</feature>
<feature type="topological domain" description="Mitochondrial matrix" evidence="2">
    <location>
        <begin status="unknown"/>
        <end position="108"/>
    </location>
</feature>
<feature type="transmembrane region" description="Helical" evidence="2">
    <location>
        <begin position="109"/>
        <end position="129"/>
    </location>
</feature>
<feature type="topological domain" description="Mitochondrial intermembrane" evidence="2">
    <location>
        <begin position="130"/>
        <end position="277"/>
    </location>
</feature>
<feature type="region of interest" description="Disordered" evidence="3">
    <location>
        <begin position="72"/>
        <end position="91"/>
    </location>
</feature>
<feature type="compositionally biased region" description="Pro residues" evidence="3">
    <location>
        <begin position="77"/>
        <end position="86"/>
    </location>
</feature>
<dbReference type="EMBL" id="CR382135">
    <property type="protein sequence ID" value="CAG85804.1"/>
    <property type="status" value="ALT_INIT"/>
    <property type="molecule type" value="Genomic_DNA"/>
</dbReference>
<dbReference type="RefSeq" id="XP_457768.1">
    <property type="nucleotide sequence ID" value="XM_457768.1"/>
</dbReference>
<dbReference type="SMR" id="Q6BVK1"/>
<dbReference type="FunCoup" id="Q6BVK1">
    <property type="interactions" value="269"/>
</dbReference>
<dbReference type="STRING" id="284592.Q6BVK1"/>
<dbReference type="GeneID" id="2900066"/>
<dbReference type="KEGG" id="dha:DEHA2C02002g"/>
<dbReference type="eggNOG" id="KOG4836">
    <property type="taxonomic scope" value="Eukaryota"/>
</dbReference>
<dbReference type="HOGENOM" id="CLU_089043_0_0_1"/>
<dbReference type="InParanoid" id="Q6BVK1"/>
<dbReference type="OrthoDB" id="436405at2759"/>
<dbReference type="Proteomes" id="UP000000599">
    <property type="component" value="Chromosome C"/>
</dbReference>
<dbReference type="GO" id="GO:0005744">
    <property type="term" value="C:TIM23 mitochondrial import inner membrane translocase complex"/>
    <property type="evidence" value="ECO:0007669"/>
    <property type="project" value="InterPro"/>
</dbReference>
<dbReference type="GO" id="GO:0030150">
    <property type="term" value="P:protein import into mitochondrial matrix"/>
    <property type="evidence" value="ECO:0007669"/>
    <property type="project" value="InterPro"/>
</dbReference>
<dbReference type="Gene3D" id="3.10.450.320">
    <property type="entry name" value="Mitochondrial import inner membrane translocase subunit Tim21"/>
    <property type="match status" value="1"/>
</dbReference>
<dbReference type="InterPro" id="IPR013261">
    <property type="entry name" value="Tim21"/>
</dbReference>
<dbReference type="InterPro" id="IPR038552">
    <property type="entry name" value="Tim21_IMS_sf"/>
</dbReference>
<dbReference type="PANTHER" id="PTHR13032">
    <property type="entry name" value="MITOCHONDRIAL IMPORT INNER MEMBRANE TRANSLOCASE SUBUNIT TIM21"/>
    <property type="match status" value="1"/>
</dbReference>
<dbReference type="PANTHER" id="PTHR13032:SF6">
    <property type="entry name" value="MITOCHONDRIAL IMPORT INNER MEMBRANE TRANSLOCASE SUBUNIT TIM21"/>
    <property type="match status" value="1"/>
</dbReference>
<dbReference type="Pfam" id="PF08294">
    <property type="entry name" value="TIM21"/>
    <property type="match status" value="1"/>
</dbReference>
<dbReference type="SUPFAM" id="SSF101447">
    <property type="entry name" value="Formin homology 2 domain (FH2 domain)"/>
    <property type="match status" value="1"/>
</dbReference>
<name>TIM21_DEBHA</name>